<protein>
    <recommendedName>
        <fullName evidence="1">Chaperonin GroEL</fullName>
        <ecNumber evidence="1">5.6.1.7</ecNumber>
    </recommendedName>
    <alternativeName>
        <fullName evidence="1">60 kDa chaperonin</fullName>
    </alternativeName>
    <alternativeName>
        <fullName evidence="1">Chaperonin-60</fullName>
        <shortName evidence="1">Cpn60</shortName>
    </alternativeName>
</protein>
<organism>
    <name type="scientific">Streptococcus pyogenes serotype M4 (strain MGAS10750)</name>
    <dbReference type="NCBI Taxonomy" id="370554"/>
    <lineage>
        <taxon>Bacteria</taxon>
        <taxon>Bacillati</taxon>
        <taxon>Bacillota</taxon>
        <taxon>Bacilli</taxon>
        <taxon>Lactobacillales</taxon>
        <taxon>Streptococcaceae</taxon>
        <taxon>Streptococcus</taxon>
    </lineage>
</organism>
<keyword id="KW-0067">ATP-binding</keyword>
<keyword id="KW-0143">Chaperone</keyword>
<keyword id="KW-0963">Cytoplasm</keyword>
<keyword id="KW-0413">Isomerase</keyword>
<keyword id="KW-0547">Nucleotide-binding</keyword>
<reference key="1">
    <citation type="journal article" date="2006" name="Proc. Natl. Acad. Sci. U.S.A.">
        <title>Molecular genetic anatomy of inter- and intraserotype variation in the human bacterial pathogen group A Streptococcus.</title>
        <authorList>
            <person name="Beres S.B."/>
            <person name="Richter E.W."/>
            <person name="Nagiec M.J."/>
            <person name="Sumby P."/>
            <person name="Porcella S.F."/>
            <person name="DeLeo F.R."/>
            <person name="Musser J.M."/>
        </authorList>
    </citation>
    <scope>NUCLEOTIDE SEQUENCE [LARGE SCALE GENOMIC DNA]</scope>
    <source>
        <strain>MGAS10750</strain>
    </source>
</reference>
<dbReference type="EC" id="5.6.1.7" evidence="1"/>
<dbReference type="EMBL" id="CP000262">
    <property type="protein sequence ID" value="ABF38805.1"/>
    <property type="molecule type" value="Genomic_DNA"/>
</dbReference>
<dbReference type="SMR" id="Q1J4D1"/>
<dbReference type="KEGG" id="spi:MGAS10750_Spy1855"/>
<dbReference type="HOGENOM" id="CLU_016503_3_0_9"/>
<dbReference type="Proteomes" id="UP000002434">
    <property type="component" value="Chromosome"/>
</dbReference>
<dbReference type="GO" id="GO:0005737">
    <property type="term" value="C:cytoplasm"/>
    <property type="evidence" value="ECO:0007669"/>
    <property type="project" value="UniProtKB-SubCell"/>
</dbReference>
<dbReference type="GO" id="GO:0005524">
    <property type="term" value="F:ATP binding"/>
    <property type="evidence" value="ECO:0007669"/>
    <property type="project" value="UniProtKB-UniRule"/>
</dbReference>
<dbReference type="GO" id="GO:0140662">
    <property type="term" value="F:ATP-dependent protein folding chaperone"/>
    <property type="evidence" value="ECO:0007669"/>
    <property type="project" value="InterPro"/>
</dbReference>
<dbReference type="GO" id="GO:0016853">
    <property type="term" value="F:isomerase activity"/>
    <property type="evidence" value="ECO:0007669"/>
    <property type="project" value="UniProtKB-KW"/>
</dbReference>
<dbReference type="GO" id="GO:0051082">
    <property type="term" value="F:unfolded protein binding"/>
    <property type="evidence" value="ECO:0007669"/>
    <property type="project" value="UniProtKB-UniRule"/>
</dbReference>
<dbReference type="GO" id="GO:0042026">
    <property type="term" value="P:protein refolding"/>
    <property type="evidence" value="ECO:0007669"/>
    <property type="project" value="UniProtKB-UniRule"/>
</dbReference>
<dbReference type="CDD" id="cd03344">
    <property type="entry name" value="GroEL"/>
    <property type="match status" value="1"/>
</dbReference>
<dbReference type="FunFam" id="1.10.560.10:FF:000001">
    <property type="entry name" value="60 kDa chaperonin"/>
    <property type="match status" value="1"/>
</dbReference>
<dbReference type="FunFam" id="3.50.7.10:FF:000001">
    <property type="entry name" value="60 kDa chaperonin"/>
    <property type="match status" value="1"/>
</dbReference>
<dbReference type="Gene3D" id="3.50.7.10">
    <property type="entry name" value="GroEL"/>
    <property type="match status" value="1"/>
</dbReference>
<dbReference type="Gene3D" id="1.10.560.10">
    <property type="entry name" value="GroEL-like equatorial domain"/>
    <property type="match status" value="1"/>
</dbReference>
<dbReference type="Gene3D" id="3.30.260.10">
    <property type="entry name" value="TCP-1-like chaperonin intermediate domain"/>
    <property type="match status" value="1"/>
</dbReference>
<dbReference type="HAMAP" id="MF_00600">
    <property type="entry name" value="CH60"/>
    <property type="match status" value="1"/>
</dbReference>
<dbReference type="InterPro" id="IPR018370">
    <property type="entry name" value="Chaperonin_Cpn60_CS"/>
</dbReference>
<dbReference type="InterPro" id="IPR001844">
    <property type="entry name" value="Cpn60/GroEL"/>
</dbReference>
<dbReference type="InterPro" id="IPR002423">
    <property type="entry name" value="Cpn60/GroEL/TCP-1"/>
</dbReference>
<dbReference type="InterPro" id="IPR027409">
    <property type="entry name" value="GroEL-like_apical_dom_sf"/>
</dbReference>
<dbReference type="InterPro" id="IPR027413">
    <property type="entry name" value="GROEL-like_equatorial_sf"/>
</dbReference>
<dbReference type="InterPro" id="IPR027410">
    <property type="entry name" value="TCP-1-like_intermed_sf"/>
</dbReference>
<dbReference type="NCBIfam" id="TIGR02348">
    <property type="entry name" value="GroEL"/>
    <property type="match status" value="1"/>
</dbReference>
<dbReference type="NCBIfam" id="NF000592">
    <property type="entry name" value="PRK00013.1"/>
    <property type="match status" value="1"/>
</dbReference>
<dbReference type="NCBIfam" id="NF009487">
    <property type="entry name" value="PRK12849.1"/>
    <property type="match status" value="1"/>
</dbReference>
<dbReference type="NCBIfam" id="NF009488">
    <property type="entry name" value="PRK12850.1"/>
    <property type="match status" value="1"/>
</dbReference>
<dbReference type="NCBIfam" id="NF009489">
    <property type="entry name" value="PRK12851.1"/>
    <property type="match status" value="1"/>
</dbReference>
<dbReference type="PANTHER" id="PTHR45633">
    <property type="entry name" value="60 KDA HEAT SHOCK PROTEIN, MITOCHONDRIAL"/>
    <property type="match status" value="1"/>
</dbReference>
<dbReference type="Pfam" id="PF00118">
    <property type="entry name" value="Cpn60_TCP1"/>
    <property type="match status" value="1"/>
</dbReference>
<dbReference type="PRINTS" id="PR00298">
    <property type="entry name" value="CHAPERONIN60"/>
</dbReference>
<dbReference type="SUPFAM" id="SSF52029">
    <property type="entry name" value="GroEL apical domain-like"/>
    <property type="match status" value="1"/>
</dbReference>
<dbReference type="SUPFAM" id="SSF48592">
    <property type="entry name" value="GroEL equatorial domain-like"/>
    <property type="match status" value="1"/>
</dbReference>
<dbReference type="SUPFAM" id="SSF54849">
    <property type="entry name" value="GroEL-intermediate domain like"/>
    <property type="match status" value="1"/>
</dbReference>
<dbReference type="PROSITE" id="PS00296">
    <property type="entry name" value="CHAPERONINS_CPN60"/>
    <property type="match status" value="1"/>
</dbReference>
<comment type="function">
    <text evidence="1">Together with its co-chaperonin GroES, plays an essential role in assisting protein folding. The GroEL-GroES system forms a nano-cage that allows encapsulation of the non-native substrate proteins and provides a physical environment optimized to promote and accelerate protein folding.</text>
</comment>
<comment type="catalytic activity">
    <reaction evidence="1">
        <text>ATP + H2O + a folded polypeptide = ADP + phosphate + an unfolded polypeptide.</text>
        <dbReference type="EC" id="5.6.1.7"/>
    </reaction>
</comment>
<comment type="subunit">
    <text evidence="1">Forms a cylinder of 14 subunits composed of two heptameric rings stacked back-to-back. Interacts with the co-chaperonin GroES.</text>
</comment>
<comment type="subcellular location">
    <subcellularLocation>
        <location evidence="1">Cytoplasm</location>
    </subcellularLocation>
</comment>
<comment type="similarity">
    <text evidence="1">Belongs to the chaperonin (HSP60) family.</text>
</comment>
<accession>Q1J4D1</accession>
<name>CH60_STRPF</name>
<gene>
    <name evidence="1" type="primary">groEL</name>
    <name evidence="1" type="synonym">groL</name>
    <name type="ordered locus">MGAS10750_Spy1855</name>
</gene>
<feature type="chain" id="PRO_0000257001" description="Chaperonin GroEL">
    <location>
        <begin position="1"/>
        <end position="545"/>
    </location>
</feature>
<feature type="binding site" evidence="1">
    <location>
        <begin position="31"/>
        <end position="34"/>
    </location>
    <ligand>
        <name>ATP</name>
        <dbReference type="ChEBI" id="CHEBI:30616"/>
    </ligand>
</feature>
<feature type="binding site" evidence="1">
    <location>
        <begin position="88"/>
        <end position="92"/>
    </location>
    <ligand>
        <name>ATP</name>
        <dbReference type="ChEBI" id="CHEBI:30616"/>
    </ligand>
</feature>
<feature type="binding site" evidence="1">
    <location>
        <position position="415"/>
    </location>
    <ligand>
        <name>ATP</name>
        <dbReference type="ChEBI" id="CHEBI:30616"/>
    </ligand>
</feature>
<feature type="binding site" evidence="1">
    <location>
        <begin position="478"/>
        <end position="480"/>
    </location>
    <ligand>
        <name>ATP</name>
        <dbReference type="ChEBI" id="CHEBI:30616"/>
    </ligand>
</feature>
<feature type="binding site" evidence="1">
    <location>
        <position position="494"/>
    </location>
    <ligand>
        <name>ATP</name>
        <dbReference type="ChEBI" id="CHEBI:30616"/>
    </ligand>
</feature>
<proteinExistence type="inferred from homology"/>
<evidence type="ECO:0000255" key="1">
    <source>
        <dbReference type="HAMAP-Rule" id="MF_00600"/>
    </source>
</evidence>
<sequence length="545" mass="57311">MNMAKDIKFSADARAAMVRGVDMLADTVKVTLGPKGRNVVLEKAFGSPLITNDGVTIAKEIELEDHFENMGAKLVSEVASKTNDIAGDGTTTATVLTQAIVHEGLKNVTAGANPIGIRRGIETATATAVEALKAIAQPVSGKEAIAQVAAVSSRSEKVGEYISEAMERVGNDGVITIEESRGMETELEVVEGMQFDRGYLSQYMVTDNEKMVADLENPFILITDKKVSNIQDILPLLEEVLKTNRPLLIIADDVDGEALPTLVLNKIRGTFNVVAVKAPGFGDRRKAMLEDIAILTGGTVITEDLGLELKDATMTALGQAAKITVDKDSTVIVEGSGSSEAIANRIALIKSQLETTTSDFDREKLQERLAKLAGGVAVIKVGAPTETALKEMKLRIEDALNATRAAVEEGIVAGGGTALITVIEKVAALELEGDDATGRNIVLRALEEPVRQIALNAGYEGSVVIDKLKNSPAGTGFNAATGEWVDMIKTGIIDPVKVTRSALQNAASVASLILTTEAVVANKPEPAAPAPAMPAGMDPGMMGGF</sequence>